<sequence length="414" mass="45436">MNEVLAKGKKAKEIARELVLKSTEQKNEALSAIADQLILETAYILEENKKDIEEGKAKGFSDSLLDRLMLNEQRIVDMTEGIKQLIELRDPVGECVSAWERPNGLSIQEMRVPLGVVGMIYEARPNVTVDAATICLKTGNAVILRGSSSAIHSNKAIVAVIHRALKQTSLPQESVQLIEDTTRDSAKQLFTMNDYLDVLIPRGGKQLIDTVVREASVPVLETGAGNCHVFIDETADKQMAFDIINAKTQRPSVCNAIETIVLHEKWAEQYGSELFSSLKKRGVELRGDQKALAMDSTIVLASEEDWGTEFLSLTPAVKLVSSIEEAIHHINTYGSMHSEAIISENEEKVSKFFVSVDAAALYHNASTRFTDGSEFGSGAEIGISTQKLHVRGPMGLPALTSTKYVIRGNGQIRK</sequence>
<proteinExistence type="inferred from homology"/>
<feature type="chain" id="PRO_1000193565" description="Gamma-glutamyl phosphate reductase">
    <location>
        <begin position="1"/>
        <end position="414"/>
    </location>
</feature>
<organism>
    <name type="scientific">Bacillus anthracis (strain A0248)</name>
    <dbReference type="NCBI Taxonomy" id="592021"/>
    <lineage>
        <taxon>Bacteria</taxon>
        <taxon>Bacillati</taxon>
        <taxon>Bacillota</taxon>
        <taxon>Bacilli</taxon>
        <taxon>Bacillales</taxon>
        <taxon>Bacillaceae</taxon>
        <taxon>Bacillus</taxon>
        <taxon>Bacillus cereus group</taxon>
    </lineage>
</organism>
<accession>C3NZU4</accession>
<protein>
    <recommendedName>
        <fullName evidence="1">Gamma-glutamyl phosphate reductase</fullName>
        <shortName evidence="1">GPR</shortName>
        <ecNumber evidence="1">1.2.1.41</ecNumber>
    </recommendedName>
    <alternativeName>
        <fullName evidence="1">Glutamate-5-semialdehyde dehydrogenase</fullName>
    </alternativeName>
    <alternativeName>
        <fullName evidence="1">Glutamyl-gamma-semialdehyde dehydrogenase</fullName>
        <shortName evidence="1">GSA dehydrogenase</shortName>
    </alternativeName>
</protein>
<gene>
    <name evidence="1" type="primary">proA</name>
    <name type="ordered locus">BAA_3046</name>
</gene>
<comment type="function">
    <text evidence="1">Catalyzes the NADPH-dependent reduction of L-glutamate 5-phosphate into L-glutamate 5-semialdehyde and phosphate. The product spontaneously undergoes cyclization to form 1-pyrroline-5-carboxylate.</text>
</comment>
<comment type="catalytic activity">
    <reaction evidence="1">
        <text>L-glutamate 5-semialdehyde + phosphate + NADP(+) = L-glutamyl 5-phosphate + NADPH + H(+)</text>
        <dbReference type="Rhea" id="RHEA:19541"/>
        <dbReference type="ChEBI" id="CHEBI:15378"/>
        <dbReference type="ChEBI" id="CHEBI:43474"/>
        <dbReference type="ChEBI" id="CHEBI:57783"/>
        <dbReference type="ChEBI" id="CHEBI:58066"/>
        <dbReference type="ChEBI" id="CHEBI:58274"/>
        <dbReference type="ChEBI" id="CHEBI:58349"/>
        <dbReference type="EC" id="1.2.1.41"/>
    </reaction>
</comment>
<comment type="pathway">
    <text evidence="1">Amino-acid biosynthesis; L-proline biosynthesis; L-glutamate 5-semialdehyde from L-glutamate: step 2/2.</text>
</comment>
<comment type="subcellular location">
    <subcellularLocation>
        <location evidence="1">Cytoplasm</location>
    </subcellularLocation>
</comment>
<comment type="similarity">
    <text evidence="1">Belongs to the gamma-glutamyl phosphate reductase family.</text>
</comment>
<keyword id="KW-0028">Amino-acid biosynthesis</keyword>
<keyword id="KW-0963">Cytoplasm</keyword>
<keyword id="KW-0521">NADP</keyword>
<keyword id="KW-0560">Oxidoreductase</keyword>
<keyword id="KW-0641">Proline biosynthesis</keyword>
<name>PROA_BACAA</name>
<reference key="1">
    <citation type="submission" date="2009-04" db="EMBL/GenBank/DDBJ databases">
        <title>Genome sequence of Bacillus anthracis A0248.</title>
        <authorList>
            <person name="Dodson R.J."/>
            <person name="Munk A.C."/>
            <person name="Bruce D."/>
            <person name="Detter C."/>
            <person name="Tapia R."/>
            <person name="Sutton G."/>
            <person name="Sims D."/>
            <person name="Brettin T."/>
        </authorList>
    </citation>
    <scope>NUCLEOTIDE SEQUENCE [LARGE SCALE GENOMIC DNA]</scope>
    <source>
        <strain>A0248</strain>
    </source>
</reference>
<evidence type="ECO:0000255" key="1">
    <source>
        <dbReference type="HAMAP-Rule" id="MF_00412"/>
    </source>
</evidence>
<dbReference type="EC" id="1.2.1.41" evidence="1"/>
<dbReference type="EMBL" id="CP001598">
    <property type="protein sequence ID" value="ACQ50789.1"/>
    <property type="molecule type" value="Genomic_DNA"/>
</dbReference>
<dbReference type="RefSeq" id="WP_001006638.1">
    <property type="nucleotide sequence ID" value="NC_012659.1"/>
</dbReference>
<dbReference type="SMR" id="C3NZU4"/>
<dbReference type="GeneID" id="45022805"/>
<dbReference type="KEGG" id="bai:BAA_3046"/>
<dbReference type="HOGENOM" id="CLU_030231_0_0_9"/>
<dbReference type="UniPathway" id="UPA00098">
    <property type="reaction ID" value="UER00360"/>
</dbReference>
<dbReference type="GO" id="GO:0005737">
    <property type="term" value="C:cytoplasm"/>
    <property type="evidence" value="ECO:0007669"/>
    <property type="project" value="UniProtKB-SubCell"/>
</dbReference>
<dbReference type="GO" id="GO:0004350">
    <property type="term" value="F:glutamate-5-semialdehyde dehydrogenase activity"/>
    <property type="evidence" value="ECO:0007669"/>
    <property type="project" value="UniProtKB-UniRule"/>
</dbReference>
<dbReference type="GO" id="GO:0050661">
    <property type="term" value="F:NADP binding"/>
    <property type="evidence" value="ECO:0007669"/>
    <property type="project" value="InterPro"/>
</dbReference>
<dbReference type="GO" id="GO:0055129">
    <property type="term" value="P:L-proline biosynthetic process"/>
    <property type="evidence" value="ECO:0007669"/>
    <property type="project" value="UniProtKB-UniRule"/>
</dbReference>
<dbReference type="CDD" id="cd07079">
    <property type="entry name" value="ALDH_F18-19_ProA-GPR"/>
    <property type="match status" value="1"/>
</dbReference>
<dbReference type="FunFam" id="3.40.309.10:FF:000006">
    <property type="entry name" value="Gamma-glutamyl phosphate reductase"/>
    <property type="match status" value="1"/>
</dbReference>
<dbReference type="Gene3D" id="3.40.605.10">
    <property type="entry name" value="Aldehyde Dehydrogenase, Chain A, domain 1"/>
    <property type="match status" value="1"/>
</dbReference>
<dbReference type="Gene3D" id="3.40.309.10">
    <property type="entry name" value="Aldehyde Dehydrogenase, Chain A, domain 2"/>
    <property type="match status" value="1"/>
</dbReference>
<dbReference type="HAMAP" id="MF_00412">
    <property type="entry name" value="ProA"/>
    <property type="match status" value="1"/>
</dbReference>
<dbReference type="InterPro" id="IPR016161">
    <property type="entry name" value="Ald_DH/histidinol_DH"/>
</dbReference>
<dbReference type="InterPro" id="IPR016163">
    <property type="entry name" value="Ald_DH_C"/>
</dbReference>
<dbReference type="InterPro" id="IPR016162">
    <property type="entry name" value="Ald_DH_N"/>
</dbReference>
<dbReference type="InterPro" id="IPR015590">
    <property type="entry name" value="Aldehyde_DH_dom"/>
</dbReference>
<dbReference type="InterPro" id="IPR020593">
    <property type="entry name" value="G-glutamylP_reductase_CS"/>
</dbReference>
<dbReference type="InterPro" id="IPR012134">
    <property type="entry name" value="Glu-5-SA_DH"/>
</dbReference>
<dbReference type="InterPro" id="IPR000965">
    <property type="entry name" value="GPR_dom"/>
</dbReference>
<dbReference type="NCBIfam" id="NF001221">
    <property type="entry name" value="PRK00197.1"/>
    <property type="match status" value="1"/>
</dbReference>
<dbReference type="NCBIfam" id="TIGR00407">
    <property type="entry name" value="proA"/>
    <property type="match status" value="1"/>
</dbReference>
<dbReference type="PANTHER" id="PTHR11063:SF8">
    <property type="entry name" value="DELTA-1-PYRROLINE-5-CARBOXYLATE SYNTHASE"/>
    <property type="match status" value="1"/>
</dbReference>
<dbReference type="PANTHER" id="PTHR11063">
    <property type="entry name" value="GLUTAMATE SEMIALDEHYDE DEHYDROGENASE"/>
    <property type="match status" value="1"/>
</dbReference>
<dbReference type="Pfam" id="PF00171">
    <property type="entry name" value="Aldedh"/>
    <property type="match status" value="1"/>
</dbReference>
<dbReference type="PIRSF" id="PIRSF000151">
    <property type="entry name" value="GPR"/>
    <property type="match status" value="1"/>
</dbReference>
<dbReference type="SUPFAM" id="SSF53720">
    <property type="entry name" value="ALDH-like"/>
    <property type="match status" value="1"/>
</dbReference>
<dbReference type="PROSITE" id="PS01223">
    <property type="entry name" value="PROA"/>
    <property type="match status" value="1"/>
</dbReference>